<name>RSMH_XANOP</name>
<reference key="1">
    <citation type="journal article" date="2008" name="BMC Genomics">
        <title>Genome sequence and rapid evolution of the rice pathogen Xanthomonas oryzae pv. oryzae PXO99A.</title>
        <authorList>
            <person name="Salzberg S.L."/>
            <person name="Sommer D.D."/>
            <person name="Schatz M.C."/>
            <person name="Phillippy A.M."/>
            <person name="Rabinowicz P.D."/>
            <person name="Tsuge S."/>
            <person name="Furutani A."/>
            <person name="Ochiai H."/>
            <person name="Delcher A.L."/>
            <person name="Kelley D."/>
            <person name="Madupu R."/>
            <person name="Puiu D."/>
            <person name="Radune D."/>
            <person name="Shumway M."/>
            <person name="Trapnell C."/>
            <person name="Aparna G."/>
            <person name="Jha G."/>
            <person name="Pandey A."/>
            <person name="Patil P.B."/>
            <person name="Ishihara H."/>
            <person name="Meyer D.F."/>
            <person name="Szurek B."/>
            <person name="Verdier V."/>
            <person name="Koebnik R."/>
            <person name="Dow J.M."/>
            <person name="Ryan R.P."/>
            <person name="Hirata H."/>
            <person name="Tsuyumu S."/>
            <person name="Won Lee S."/>
            <person name="Seo Y.-S."/>
            <person name="Sriariyanum M."/>
            <person name="Ronald P.C."/>
            <person name="Sonti R.V."/>
            <person name="Van Sluys M.-A."/>
            <person name="Leach J.E."/>
            <person name="White F.F."/>
            <person name="Bogdanove A.J."/>
        </authorList>
    </citation>
    <scope>NUCLEOTIDE SEQUENCE [LARGE SCALE GENOMIC DNA]</scope>
    <source>
        <strain>PXO99A</strain>
    </source>
</reference>
<accession>B2SNY6</accession>
<gene>
    <name evidence="1" type="primary">rsmH</name>
    <name type="synonym">mraW</name>
    <name type="ordered locus">PXO_04374</name>
</gene>
<sequence length="337" mass="36111">MSQPPAAHVPVLYTQVLDGLQVTENGTYLDGTFGRGGHARGVLEHLGPGGRLLVMDKDPDAIAVAEQTFGGDARVSIHRGSFAGLGQVVAAATVDGILLDLGVSSPQLDVAGRGFSFGKDGPLDMRMDPDSGQSAAQWLAQATDREIADVLWAYGEERQSRRIARAIVARRAEQPLLRTAQLADLIASVMPRGDSKTHPATRSFQAIRIYINRELDDLETGLDAALAALKPGGRLAVISFHSLEDRIVKQFMARYAKAPPSNRRLPEAQPFVPTLQLVSGAIKADDTELNVNPRARSAVLRVAEKLELGIGDSGLERRSGRIPNPRSPIPASQGDAR</sequence>
<evidence type="ECO:0000255" key="1">
    <source>
        <dbReference type="HAMAP-Rule" id="MF_01007"/>
    </source>
</evidence>
<evidence type="ECO:0000256" key="2">
    <source>
        <dbReference type="SAM" id="MobiDB-lite"/>
    </source>
</evidence>
<evidence type="ECO:0000305" key="3"/>
<dbReference type="EC" id="2.1.1.199" evidence="1"/>
<dbReference type="EMBL" id="CP000967">
    <property type="protein sequence ID" value="ACD57687.1"/>
    <property type="status" value="ALT_INIT"/>
    <property type="molecule type" value="Genomic_DNA"/>
</dbReference>
<dbReference type="SMR" id="B2SNY6"/>
<dbReference type="KEGG" id="xop:PXO_04374"/>
<dbReference type="eggNOG" id="COG0275">
    <property type="taxonomic scope" value="Bacteria"/>
</dbReference>
<dbReference type="HOGENOM" id="CLU_038422_2_0_6"/>
<dbReference type="Proteomes" id="UP000001740">
    <property type="component" value="Chromosome"/>
</dbReference>
<dbReference type="GO" id="GO:0005737">
    <property type="term" value="C:cytoplasm"/>
    <property type="evidence" value="ECO:0007669"/>
    <property type="project" value="UniProtKB-SubCell"/>
</dbReference>
<dbReference type="GO" id="GO:0071424">
    <property type="term" value="F:rRNA (cytosine-N4-)-methyltransferase activity"/>
    <property type="evidence" value="ECO:0007669"/>
    <property type="project" value="UniProtKB-UniRule"/>
</dbReference>
<dbReference type="GO" id="GO:0070475">
    <property type="term" value="P:rRNA base methylation"/>
    <property type="evidence" value="ECO:0007669"/>
    <property type="project" value="UniProtKB-UniRule"/>
</dbReference>
<dbReference type="FunFam" id="1.10.150.170:FF:000001">
    <property type="entry name" value="Ribosomal RNA small subunit methyltransferase H"/>
    <property type="match status" value="1"/>
</dbReference>
<dbReference type="Gene3D" id="1.10.150.170">
    <property type="entry name" value="Putative methyltransferase TM0872, insert domain"/>
    <property type="match status" value="1"/>
</dbReference>
<dbReference type="Gene3D" id="3.40.50.150">
    <property type="entry name" value="Vaccinia Virus protein VP39"/>
    <property type="match status" value="1"/>
</dbReference>
<dbReference type="HAMAP" id="MF_01007">
    <property type="entry name" value="16SrRNA_methyltr_H"/>
    <property type="match status" value="1"/>
</dbReference>
<dbReference type="InterPro" id="IPR002903">
    <property type="entry name" value="RsmH"/>
</dbReference>
<dbReference type="InterPro" id="IPR023397">
    <property type="entry name" value="SAM-dep_MeTrfase_MraW_recog"/>
</dbReference>
<dbReference type="InterPro" id="IPR029063">
    <property type="entry name" value="SAM-dependent_MTases_sf"/>
</dbReference>
<dbReference type="NCBIfam" id="TIGR00006">
    <property type="entry name" value="16S rRNA (cytosine(1402)-N(4))-methyltransferase RsmH"/>
    <property type="match status" value="1"/>
</dbReference>
<dbReference type="PANTHER" id="PTHR11265:SF0">
    <property type="entry name" value="12S RRNA N4-METHYLCYTIDINE METHYLTRANSFERASE"/>
    <property type="match status" value="1"/>
</dbReference>
<dbReference type="PANTHER" id="PTHR11265">
    <property type="entry name" value="S-ADENOSYL-METHYLTRANSFERASE MRAW"/>
    <property type="match status" value="1"/>
</dbReference>
<dbReference type="Pfam" id="PF01795">
    <property type="entry name" value="Methyltransf_5"/>
    <property type="match status" value="1"/>
</dbReference>
<dbReference type="PIRSF" id="PIRSF004486">
    <property type="entry name" value="MraW"/>
    <property type="match status" value="1"/>
</dbReference>
<dbReference type="SUPFAM" id="SSF81799">
    <property type="entry name" value="Putative methyltransferase TM0872, insert domain"/>
    <property type="match status" value="1"/>
</dbReference>
<dbReference type="SUPFAM" id="SSF53335">
    <property type="entry name" value="S-adenosyl-L-methionine-dependent methyltransferases"/>
    <property type="match status" value="1"/>
</dbReference>
<proteinExistence type="inferred from homology"/>
<organism>
    <name type="scientific">Xanthomonas oryzae pv. oryzae (strain PXO99A)</name>
    <dbReference type="NCBI Taxonomy" id="360094"/>
    <lineage>
        <taxon>Bacteria</taxon>
        <taxon>Pseudomonadati</taxon>
        <taxon>Pseudomonadota</taxon>
        <taxon>Gammaproteobacteria</taxon>
        <taxon>Lysobacterales</taxon>
        <taxon>Lysobacteraceae</taxon>
        <taxon>Xanthomonas</taxon>
    </lineage>
</organism>
<protein>
    <recommendedName>
        <fullName evidence="1">Ribosomal RNA small subunit methyltransferase H</fullName>
        <ecNumber evidence="1">2.1.1.199</ecNumber>
    </recommendedName>
    <alternativeName>
        <fullName evidence="1">16S rRNA m(4)C1402 methyltransferase</fullName>
    </alternativeName>
    <alternativeName>
        <fullName evidence="1">rRNA (cytosine-N(4)-)-methyltransferase RsmH</fullName>
    </alternativeName>
</protein>
<keyword id="KW-0963">Cytoplasm</keyword>
<keyword id="KW-0489">Methyltransferase</keyword>
<keyword id="KW-0698">rRNA processing</keyword>
<keyword id="KW-0949">S-adenosyl-L-methionine</keyword>
<keyword id="KW-0808">Transferase</keyword>
<feature type="chain" id="PRO_0000387215" description="Ribosomal RNA small subunit methyltransferase H">
    <location>
        <begin position="1"/>
        <end position="337"/>
    </location>
</feature>
<feature type="region of interest" description="Disordered" evidence="2">
    <location>
        <begin position="314"/>
        <end position="337"/>
    </location>
</feature>
<feature type="binding site" evidence="1">
    <location>
        <begin position="36"/>
        <end position="38"/>
    </location>
    <ligand>
        <name>S-adenosyl-L-methionine</name>
        <dbReference type="ChEBI" id="CHEBI:59789"/>
    </ligand>
</feature>
<feature type="binding site" evidence="1">
    <location>
        <position position="56"/>
    </location>
    <ligand>
        <name>S-adenosyl-L-methionine</name>
        <dbReference type="ChEBI" id="CHEBI:59789"/>
    </ligand>
</feature>
<feature type="binding site" evidence="1">
    <location>
        <position position="82"/>
    </location>
    <ligand>
        <name>S-adenosyl-L-methionine</name>
        <dbReference type="ChEBI" id="CHEBI:59789"/>
    </ligand>
</feature>
<feature type="binding site" evidence="1">
    <location>
        <position position="100"/>
    </location>
    <ligand>
        <name>S-adenosyl-L-methionine</name>
        <dbReference type="ChEBI" id="CHEBI:59789"/>
    </ligand>
</feature>
<feature type="binding site" evidence="1">
    <location>
        <position position="107"/>
    </location>
    <ligand>
        <name>S-adenosyl-L-methionine</name>
        <dbReference type="ChEBI" id="CHEBI:59789"/>
    </ligand>
</feature>
<comment type="function">
    <text evidence="1">Specifically methylates the N4 position of cytidine in position 1402 (C1402) of 16S rRNA.</text>
</comment>
<comment type="catalytic activity">
    <reaction evidence="1">
        <text>cytidine(1402) in 16S rRNA + S-adenosyl-L-methionine = N(4)-methylcytidine(1402) in 16S rRNA + S-adenosyl-L-homocysteine + H(+)</text>
        <dbReference type="Rhea" id="RHEA:42928"/>
        <dbReference type="Rhea" id="RHEA-COMP:10286"/>
        <dbReference type="Rhea" id="RHEA-COMP:10287"/>
        <dbReference type="ChEBI" id="CHEBI:15378"/>
        <dbReference type="ChEBI" id="CHEBI:57856"/>
        <dbReference type="ChEBI" id="CHEBI:59789"/>
        <dbReference type="ChEBI" id="CHEBI:74506"/>
        <dbReference type="ChEBI" id="CHEBI:82748"/>
        <dbReference type="EC" id="2.1.1.199"/>
    </reaction>
</comment>
<comment type="subcellular location">
    <subcellularLocation>
        <location evidence="1">Cytoplasm</location>
    </subcellularLocation>
</comment>
<comment type="similarity">
    <text evidence="1">Belongs to the methyltransferase superfamily. RsmH family.</text>
</comment>
<comment type="sequence caution" evidence="3">
    <conflict type="erroneous initiation">
        <sequence resource="EMBL-CDS" id="ACD57687"/>
    </conflict>
</comment>